<sequence>NECIRKWLSCVDRKNDCCEGLECYKRRHSFEVCVPIPGFCLVKWKQCDGRERDCCAGLECWKRSGNKSSVCAPIT</sequence>
<evidence type="ECO:0000250" key="1">
    <source>
        <dbReference type="UniProtKB" id="P0DP47"/>
    </source>
</evidence>
<evidence type="ECO:0000250" key="2">
    <source>
        <dbReference type="UniProtKB" id="P60514"/>
    </source>
</evidence>
<evidence type="ECO:0000269" key="3">
    <source>
    </source>
</evidence>
<evidence type="ECO:0000269" key="4">
    <source>
    </source>
</evidence>
<evidence type="ECO:0000303" key="5">
    <source>
    </source>
</evidence>
<evidence type="ECO:0000305" key="6"/>
<evidence type="ECO:0000305" key="7">
    <source>
    </source>
</evidence>
<evidence type="ECO:0000312" key="8">
    <source>
        <dbReference type="PDB" id="2N8F"/>
    </source>
</evidence>
<evidence type="ECO:0007829" key="9">
    <source>
        <dbReference type="PDB" id="2N8F"/>
    </source>
</evidence>
<proteinExistence type="evidence at protein level"/>
<reference key="1">
    <citation type="journal article" date="2017" name="Proc. Natl. Acad. Sci. U.S.A.">
        <title>Potent neuroprotection after stroke afforded by a double-knot spider-venom peptide that inhibits acid-sensing ion channel 1a.</title>
        <authorList>
            <person name="Chassagnon I.R."/>
            <person name="McCarthy C.A."/>
            <person name="Chin Y.K."/>
            <person name="Pineda S.S."/>
            <person name="Keramidas A."/>
            <person name="Mobli M."/>
            <person name="Pham V."/>
            <person name="De Silva T.M."/>
            <person name="Lynch J.W."/>
            <person name="Widdop R.E."/>
            <person name="Rash L.D."/>
            <person name="King G.F."/>
        </authorList>
    </citation>
    <scope>NUCLEOTIDE SEQUENCE [MRNA]</scope>
    <scope>STRUCTURE BY NMR</scope>
    <scope>DISULFIDE BONDS</scope>
    <scope>MUTAGENESIS OF 1-ASN--VAL-34; ASN-1; PRO-35 AND 36-ILE--THR-75</scope>
    <source>
        <tissue>Venom gland</tissue>
    </source>
</reference>
<reference key="2">
    <citation type="journal article" date="2019" name="Vet. Parasitol.">
        <title>The antitrypanosomal diarylamidines, diminazene and pentamidine, show anthelmintic activity against Haemonchus contortus in vitro.</title>
        <authorList>
            <person name="Nixon S.A."/>
            <person name="Saez N.J."/>
            <person name="Herzig V."/>
            <person name="King G.F."/>
            <person name="Kotze A.C."/>
        </authorList>
    </citation>
    <scope>FUNCTION</scope>
</reference>
<dbReference type="PDB" id="2N8F">
    <property type="method" value="NMR"/>
    <property type="chains" value="A=1-75"/>
</dbReference>
<dbReference type="PDBsum" id="2N8F"/>
<dbReference type="SMR" id="A0A1L1QJU3"/>
<dbReference type="GO" id="GO:0005576">
    <property type="term" value="C:extracellular region"/>
    <property type="evidence" value="ECO:0007669"/>
    <property type="project" value="UniProtKB-SubCell"/>
</dbReference>
<dbReference type="GO" id="GO:0099106">
    <property type="term" value="F:ion channel regulator activity"/>
    <property type="evidence" value="ECO:0007669"/>
    <property type="project" value="UniProtKB-KW"/>
</dbReference>
<dbReference type="GO" id="GO:0090729">
    <property type="term" value="F:toxin activity"/>
    <property type="evidence" value="ECO:0007669"/>
    <property type="project" value="UniProtKB-KW"/>
</dbReference>
<dbReference type="Gene3D" id="6.20.10.10">
    <property type="match status" value="2"/>
</dbReference>
<dbReference type="SUPFAM" id="SSF57059">
    <property type="entry name" value="omega toxin-like"/>
    <property type="match status" value="2"/>
</dbReference>
<organism>
    <name type="scientific">Hadronyche infensa</name>
    <name type="common">Fraser island funnel-web spider</name>
    <name type="synonym">Atrax infensus</name>
    <dbReference type="NCBI Taxonomy" id="153481"/>
    <lineage>
        <taxon>Eukaryota</taxon>
        <taxon>Metazoa</taxon>
        <taxon>Ecdysozoa</taxon>
        <taxon>Arthropoda</taxon>
        <taxon>Chelicerata</taxon>
        <taxon>Arachnida</taxon>
        <taxon>Araneae</taxon>
        <taxon>Mygalomorphae</taxon>
        <taxon>Hexathelidae</taxon>
        <taxon>Hadronyche</taxon>
    </lineage>
</organism>
<keyword id="KW-0002">3D-structure</keyword>
<keyword id="KW-1015">Disulfide bond</keyword>
<keyword id="KW-0872">Ion channel impairing toxin</keyword>
<keyword id="KW-0582">Pharmaceutical</keyword>
<keyword id="KW-1275">Proton-gated sodium channel impairing toxin</keyword>
<keyword id="KW-0677">Repeat</keyword>
<keyword id="KW-0964">Secreted</keyword>
<keyword id="KW-0800">Toxin</keyword>
<accession>A0A1L1QJU3</accession>
<accession>A0A1X8XKZ9</accession>
<comment type="function">
    <text evidence="3 4">This toxin potently and selectively inhibits ASIC1a (IC(50)=0.4 nM on rASIC1a and IC(50)=0.52 nM on hASIC1a), an isoform of the gene ASIC1 (PubMed:28320941). It incompletely inhibits ASIC1a activation in a pH-independent and slowly reversible manner (Tau(off)=14.2 minutes for rASIC1a and 31.8 minutes for hASIC1a) (PubMed:28320941). This toxin acts by binding to and stabilizing the closed state of the channel, thereby impeding the transition into a conducting state (PubMed:28320941). This toxin may bind to the acidic pocket of ASIC1a, since mutation of a key residue of this pocket (Arg-350) abolishes the ability of the toxin to inhibit ASIC1a (PubMed:28320941). In addition, it shows antiparasitic activities, since it moderately inhibits the larval development of the major pathogenic nematode of ruminants (H.contortus, IC(50)=22.9 uM) (PubMed:31213240). In vivo, this toxin protects the brain from neuronal injury when administered up to 8 hours after stroke onset (PubMed:28320941).</text>
</comment>
<comment type="subcellular location">
    <subcellularLocation>
        <location evidence="2">Secreted</location>
    </subcellularLocation>
</comment>
<comment type="tissue specificity">
    <text evidence="7">Expressed by the venom gland.</text>
</comment>
<comment type="domain">
    <text evidence="3">The presence of a 'disulfide through disulfide knot' structurally defines this protein as a knottin. This toxin contains 2 'disulfide through disulfide knots' that are separated by a short linker.</text>
</comment>
<comment type="pharmaceutical">
    <text evidence="7">This toxin is a promising lead for the development of therapeutics to protect the brain from ischemic injury.</text>
</comment>
<comment type="similarity">
    <text evidence="6">Belongs to the psalmotoxin-1 family. Double-knot toxin subfamily.</text>
</comment>
<comment type="online information" name="Biological Magnetic Resonance Data Bank">
    <link uri="https://bmrb.io/data_library/summary/index.php?bmrbId=25848"/>
</comment>
<protein>
    <recommendedName>
        <fullName evidence="5">Pi-hexatoxin-Hi1a</fullName>
        <shortName evidence="5">Pi-HXTX-Hi1a</shortName>
    </recommendedName>
    <alternativeName>
        <fullName evidence="6">Double-knot toxin</fullName>
        <shortName evidence="6">DkTx</shortName>
    </alternativeName>
    <alternativeName>
        <fullName evidence="1">SF1 peptide</fullName>
    </alternativeName>
</protein>
<name>TP1A_HADIN</name>
<feature type="chain" id="PRO_0000440131" description="Pi-hexatoxin-Hi1a" evidence="7">
    <location>
        <begin position="1"/>
        <end position="75"/>
    </location>
</feature>
<feature type="repeat" description="Domain 1" evidence="7">
    <location>
        <begin position="3"/>
        <end position="33"/>
    </location>
</feature>
<feature type="repeat" description="Domain 2" evidence="7">
    <location>
        <begin position="40"/>
        <end position="71"/>
    </location>
</feature>
<feature type="region of interest" description="2 X approximate repeats with cysteine pattern C-C-CC-C-C" evidence="7">
    <location>
        <begin position="3"/>
        <end position="71"/>
    </location>
</feature>
<feature type="disulfide bond" evidence="3 8">
    <location>
        <begin position="3"/>
        <end position="18"/>
    </location>
</feature>
<feature type="disulfide bond" evidence="3 8">
    <location>
        <begin position="10"/>
        <end position="23"/>
    </location>
</feature>
<feature type="disulfide bond" evidence="3 8">
    <location>
        <begin position="17"/>
        <end position="33"/>
    </location>
</feature>
<feature type="disulfide bond" evidence="3 8">
    <location>
        <begin position="40"/>
        <end position="55"/>
    </location>
</feature>
<feature type="disulfide bond" evidence="3 8">
    <location>
        <begin position="47"/>
        <end position="60"/>
    </location>
</feature>
<feature type="disulfide bond" evidence="3 8">
    <location>
        <begin position="54"/>
        <end position="71"/>
    </location>
</feature>
<feature type="mutagenesis site" description="Complete loss of inhibition of rASIC1a; mutant Hi1a:C." evidence="3">
    <location>
        <begin position="1"/>
        <end position="34"/>
    </location>
</feature>
<feature type="mutagenesis site" description="2600-fold decrease in inhibition of rASIC1a, and inhibition become fully reversible; mutant Hi1a:N." evidence="3">
    <original>N</original>
    <variation>SN</variation>
    <location>
        <position position="1"/>
    </location>
</feature>
<feature type="mutagenesis site" description="Complete loss of inhibition of rASIC1a; mutant Hi1a:C." evidence="3">
    <original>P</original>
    <variation>S</variation>
    <location>
        <position position="35"/>
    </location>
</feature>
<feature type="mutagenesis site" description="2600-fold decrease in inhibition of rASIC1a, and inhibition become fully reversible; mutant Hi1a:N." evidence="3">
    <location>
        <begin position="36"/>
        <end position="75"/>
    </location>
</feature>
<feature type="strand" evidence="9">
    <location>
        <begin position="10"/>
        <end position="12"/>
    </location>
</feature>
<feature type="strand" evidence="9">
    <location>
        <begin position="21"/>
        <end position="23"/>
    </location>
</feature>
<feature type="strand" evidence="9">
    <location>
        <begin position="27"/>
        <end position="29"/>
    </location>
</feature>
<feature type="strand" evidence="9">
    <location>
        <begin position="33"/>
        <end position="35"/>
    </location>
</feature>
<feature type="turn" evidence="9">
    <location>
        <begin position="51"/>
        <end position="53"/>
    </location>
</feature>
<feature type="strand" evidence="9">
    <location>
        <begin position="58"/>
        <end position="61"/>
    </location>
</feature>
<feature type="strand" evidence="9">
    <location>
        <begin position="65"/>
        <end position="68"/>
    </location>
</feature>
<feature type="strand" evidence="9">
    <location>
        <begin position="70"/>
        <end position="73"/>
    </location>
</feature>